<dbReference type="EMBL" id="AC082643">
    <property type="protein sequence ID" value="AAG50637.1"/>
    <property type="status" value="ALT_SEQ"/>
    <property type="molecule type" value="Genomic_DNA"/>
</dbReference>
<dbReference type="EMBL" id="CP002684">
    <property type="protein sequence ID" value="AEE33545.1"/>
    <property type="status" value="ALT_SEQ"/>
    <property type="molecule type" value="Genomic_DNA"/>
</dbReference>
<dbReference type="EMBL" id="CP002684">
    <property type="protein sequence ID" value="ANM60088.1"/>
    <property type="molecule type" value="Genomic_DNA"/>
</dbReference>
<dbReference type="EMBL" id="CP002684">
    <property type="protein sequence ID" value="ANM60089.1"/>
    <property type="molecule type" value="Genomic_DNA"/>
</dbReference>
<dbReference type="EMBL" id="AB077822">
    <property type="protein sequence ID" value="BAB83872.1"/>
    <property type="molecule type" value="Genomic_DNA"/>
</dbReference>
<dbReference type="EMBL" id="AF039380">
    <property type="protein sequence ID" value="AAC14556.1"/>
    <property type="molecule type" value="Genomic_DNA"/>
</dbReference>
<dbReference type="PIR" id="G96617">
    <property type="entry name" value="G96617"/>
</dbReference>
<dbReference type="RefSeq" id="NP_001319266.1">
    <property type="nucleotide sequence ID" value="NM_001333831.1"/>
</dbReference>
<dbReference type="RefSeq" id="NP_001322397.1">
    <property type="nucleotide sequence ID" value="NM_001333833.1"/>
</dbReference>
<dbReference type="RefSeq" id="NP_001322398.1">
    <property type="nucleotide sequence ID" value="NM_001333832.1"/>
</dbReference>
<dbReference type="SMR" id="Q8W3K3"/>
<dbReference type="STRING" id="3702.Q8W3K3"/>
<dbReference type="PaxDb" id="3702-AT1G58400.1"/>
<dbReference type="ProteomicsDB" id="224349"/>
<dbReference type="EnsemblPlants" id="AT1G58400.2">
    <property type="protein sequence ID" value="AT1G58400.2"/>
    <property type="gene ID" value="AT1G58400"/>
</dbReference>
<dbReference type="EnsemblPlants" id="AT1G58400.3">
    <property type="protein sequence ID" value="AT1G58400.3"/>
    <property type="gene ID" value="AT1G58400"/>
</dbReference>
<dbReference type="GeneID" id="842209"/>
<dbReference type="Gramene" id="AT1G58400.2">
    <property type="protein sequence ID" value="AT1G58400.2"/>
    <property type="gene ID" value="AT1G58400"/>
</dbReference>
<dbReference type="Gramene" id="AT1G58400.3">
    <property type="protein sequence ID" value="AT1G58400.3"/>
    <property type="gene ID" value="AT1G58400"/>
</dbReference>
<dbReference type="KEGG" id="ath:AT1G58400"/>
<dbReference type="Araport" id="AT1G58400"/>
<dbReference type="TAIR" id="AT1G58400"/>
<dbReference type="eggNOG" id="KOG4658">
    <property type="taxonomic scope" value="Eukaryota"/>
</dbReference>
<dbReference type="HOGENOM" id="CLU_000837_25_4_1"/>
<dbReference type="InParanoid" id="Q8W3K3"/>
<dbReference type="OMA" id="HRAWICH"/>
<dbReference type="PhylomeDB" id="Q8W3K3"/>
<dbReference type="PRO" id="PR:Q8W3K3"/>
<dbReference type="Proteomes" id="UP000006548">
    <property type="component" value="Chromosome 1"/>
</dbReference>
<dbReference type="ExpressionAtlas" id="Q8W3K3">
    <property type="expression patterns" value="baseline and differential"/>
</dbReference>
<dbReference type="GO" id="GO:0043531">
    <property type="term" value="F:ADP binding"/>
    <property type="evidence" value="ECO:0007669"/>
    <property type="project" value="InterPro"/>
</dbReference>
<dbReference type="GO" id="GO:0005524">
    <property type="term" value="F:ATP binding"/>
    <property type="evidence" value="ECO:0007669"/>
    <property type="project" value="UniProtKB-KW"/>
</dbReference>
<dbReference type="GO" id="GO:0006952">
    <property type="term" value="P:defense response"/>
    <property type="evidence" value="ECO:0007669"/>
    <property type="project" value="UniProtKB-KW"/>
</dbReference>
<dbReference type="GO" id="GO:0051707">
    <property type="term" value="P:response to other organism"/>
    <property type="evidence" value="ECO:0007669"/>
    <property type="project" value="UniProtKB-ARBA"/>
</dbReference>
<dbReference type="CDD" id="cd14798">
    <property type="entry name" value="RX-CC_like"/>
    <property type="match status" value="1"/>
</dbReference>
<dbReference type="FunFam" id="3.40.50.300:FF:001091">
    <property type="entry name" value="Probable disease resistance protein At1g61300"/>
    <property type="match status" value="1"/>
</dbReference>
<dbReference type="FunFam" id="1.10.10.10:FF:000322">
    <property type="entry name" value="Probable disease resistance protein At1g63360"/>
    <property type="match status" value="1"/>
</dbReference>
<dbReference type="FunFam" id="1.10.8.430:FF:000003">
    <property type="entry name" value="Probable disease resistance protein At5g66910"/>
    <property type="match status" value="1"/>
</dbReference>
<dbReference type="Gene3D" id="1.20.5.4130">
    <property type="match status" value="1"/>
</dbReference>
<dbReference type="Gene3D" id="1.10.8.430">
    <property type="entry name" value="Helical domain of apoptotic protease-activating factors"/>
    <property type="match status" value="1"/>
</dbReference>
<dbReference type="Gene3D" id="3.40.50.300">
    <property type="entry name" value="P-loop containing nucleotide triphosphate hydrolases"/>
    <property type="match status" value="1"/>
</dbReference>
<dbReference type="Gene3D" id="3.80.10.10">
    <property type="entry name" value="Ribonuclease Inhibitor"/>
    <property type="match status" value="1"/>
</dbReference>
<dbReference type="Gene3D" id="1.10.10.10">
    <property type="entry name" value="Winged helix-like DNA-binding domain superfamily/Winged helix DNA-binding domain"/>
    <property type="match status" value="1"/>
</dbReference>
<dbReference type="InterPro" id="IPR042197">
    <property type="entry name" value="Apaf_helical"/>
</dbReference>
<dbReference type="InterPro" id="IPR044974">
    <property type="entry name" value="Disease_R_plants"/>
</dbReference>
<dbReference type="InterPro" id="IPR032675">
    <property type="entry name" value="LRR_dom_sf"/>
</dbReference>
<dbReference type="InterPro" id="IPR055414">
    <property type="entry name" value="LRR_R13L4/SHOC2-like"/>
</dbReference>
<dbReference type="InterPro" id="IPR002182">
    <property type="entry name" value="NB-ARC"/>
</dbReference>
<dbReference type="InterPro" id="IPR027417">
    <property type="entry name" value="P-loop_NTPase"/>
</dbReference>
<dbReference type="InterPro" id="IPR038005">
    <property type="entry name" value="RX-like_CC"/>
</dbReference>
<dbReference type="InterPro" id="IPR041118">
    <property type="entry name" value="Rx_N"/>
</dbReference>
<dbReference type="InterPro" id="IPR036388">
    <property type="entry name" value="WH-like_DNA-bd_sf"/>
</dbReference>
<dbReference type="PANTHER" id="PTHR23155">
    <property type="entry name" value="DISEASE RESISTANCE PROTEIN RP"/>
    <property type="match status" value="1"/>
</dbReference>
<dbReference type="PANTHER" id="PTHR23155:SF1185">
    <property type="entry name" value="DISEASE RESISTANCE RPP8-LIKE PROTEIN 3-RELATED"/>
    <property type="match status" value="1"/>
</dbReference>
<dbReference type="Pfam" id="PF23598">
    <property type="entry name" value="LRR_14"/>
    <property type="match status" value="1"/>
</dbReference>
<dbReference type="Pfam" id="PF00931">
    <property type="entry name" value="NB-ARC"/>
    <property type="match status" value="1"/>
</dbReference>
<dbReference type="Pfam" id="PF18052">
    <property type="entry name" value="Rx_N"/>
    <property type="match status" value="1"/>
</dbReference>
<dbReference type="Pfam" id="PF23559">
    <property type="entry name" value="WH_DRP"/>
    <property type="match status" value="1"/>
</dbReference>
<dbReference type="PRINTS" id="PR00364">
    <property type="entry name" value="DISEASERSIST"/>
</dbReference>
<dbReference type="SUPFAM" id="SSF52058">
    <property type="entry name" value="L domain-like"/>
    <property type="match status" value="1"/>
</dbReference>
<dbReference type="SUPFAM" id="SSF52540">
    <property type="entry name" value="P-loop containing nucleoside triphosphate hydrolases"/>
    <property type="match status" value="1"/>
</dbReference>
<gene>
    <name type="ordered locus">At1g58400</name>
    <name type="ORF">F9K23.7</name>
    <name type="ORF">X7J.13</name>
</gene>
<comment type="function">
    <text>Potential disease resistance protein.</text>
</comment>
<comment type="domain">
    <text evidence="1">The LRR repeats probably act as specificity determinant of pathogen recognition.</text>
</comment>
<comment type="similarity">
    <text evidence="3">Belongs to the disease resistance NB-LRR family.</text>
</comment>
<comment type="sequence caution" evidence="3">
    <conflict type="erroneous gene model prediction">
        <sequence resource="EMBL-CDS" id="AAG50637"/>
    </conflict>
</comment>
<comment type="sequence caution" evidence="3">
    <conflict type="erroneous gene model prediction">
        <sequence resource="EMBL-CDS" id="AEE33545"/>
    </conflict>
</comment>
<comment type="online information" name="NIB-LRRS">
    <link uri="http://niblrrs.ucdavis.edu"/>
    <text>Functional and comparative genomics of disease resistance gene homologs</text>
</comment>
<reference key="1">
    <citation type="journal article" date="2000" name="Nature">
        <title>Sequence and analysis of chromosome 1 of the plant Arabidopsis thaliana.</title>
        <authorList>
            <person name="Theologis A."/>
            <person name="Ecker J.R."/>
            <person name="Palm C.J."/>
            <person name="Federspiel N.A."/>
            <person name="Kaul S."/>
            <person name="White O."/>
            <person name="Alonso J."/>
            <person name="Altafi H."/>
            <person name="Araujo R."/>
            <person name="Bowman C.L."/>
            <person name="Brooks S.Y."/>
            <person name="Buehler E."/>
            <person name="Chan A."/>
            <person name="Chao Q."/>
            <person name="Chen H."/>
            <person name="Cheuk R.F."/>
            <person name="Chin C.W."/>
            <person name="Chung M.K."/>
            <person name="Conn L."/>
            <person name="Conway A.B."/>
            <person name="Conway A.R."/>
            <person name="Creasy T.H."/>
            <person name="Dewar K."/>
            <person name="Dunn P."/>
            <person name="Etgu P."/>
            <person name="Feldblyum T.V."/>
            <person name="Feng J.-D."/>
            <person name="Fong B."/>
            <person name="Fujii C.Y."/>
            <person name="Gill J.E."/>
            <person name="Goldsmith A.D."/>
            <person name="Haas B."/>
            <person name="Hansen N.F."/>
            <person name="Hughes B."/>
            <person name="Huizar L."/>
            <person name="Hunter J.L."/>
            <person name="Jenkins J."/>
            <person name="Johnson-Hopson C."/>
            <person name="Khan S."/>
            <person name="Khaykin E."/>
            <person name="Kim C.J."/>
            <person name="Koo H.L."/>
            <person name="Kremenetskaia I."/>
            <person name="Kurtz D.B."/>
            <person name="Kwan A."/>
            <person name="Lam B."/>
            <person name="Langin-Hooper S."/>
            <person name="Lee A."/>
            <person name="Lee J.M."/>
            <person name="Lenz C.A."/>
            <person name="Li J.H."/>
            <person name="Li Y.-P."/>
            <person name="Lin X."/>
            <person name="Liu S.X."/>
            <person name="Liu Z.A."/>
            <person name="Luros J.S."/>
            <person name="Maiti R."/>
            <person name="Marziali A."/>
            <person name="Militscher J."/>
            <person name="Miranda M."/>
            <person name="Nguyen M."/>
            <person name="Nierman W.C."/>
            <person name="Osborne B.I."/>
            <person name="Pai G."/>
            <person name="Peterson J."/>
            <person name="Pham P.K."/>
            <person name="Rizzo M."/>
            <person name="Rooney T."/>
            <person name="Rowley D."/>
            <person name="Sakano H."/>
            <person name="Salzberg S.L."/>
            <person name="Schwartz J.R."/>
            <person name="Shinn P."/>
            <person name="Southwick A.M."/>
            <person name="Sun H."/>
            <person name="Tallon L.J."/>
            <person name="Tambunga G."/>
            <person name="Toriumi M.J."/>
            <person name="Town C.D."/>
            <person name="Utterback T."/>
            <person name="Van Aken S."/>
            <person name="Vaysberg M."/>
            <person name="Vysotskaia V.S."/>
            <person name="Walker M."/>
            <person name="Wu D."/>
            <person name="Yu G."/>
            <person name="Fraser C.M."/>
            <person name="Venter J.C."/>
            <person name="Davis R.W."/>
        </authorList>
    </citation>
    <scope>NUCLEOTIDE SEQUENCE [LARGE SCALE GENOMIC DNA]</scope>
    <source>
        <strain>cv. Columbia</strain>
    </source>
</reference>
<reference key="2">
    <citation type="journal article" date="2017" name="Plant J.">
        <title>Araport11: a complete reannotation of the Arabidopsis thaliana reference genome.</title>
        <authorList>
            <person name="Cheng C.Y."/>
            <person name="Krishnakumar V."/>
            <person name="Chan A.P."/>
            <person name="Thibaud-Nissen F."/>
            <person name="Schobel S."/>
            <person name="Town C.D."/>
        </authorList>
    </citation>
    <scope>GENOME REANNOTATION</scope>
    <source>
        <strain>cv. Columbia</strain>
    </source>
</reference>
<reference key="3">
    <citation type="submission" date="2002-01" db="EMBL/GenBank/DDBJ databases">
        <title>Long repeat sequence within a genomic region located around the 100 map unit of chromosome 1 in Arabidopsis thaliana.</title>
        <authorList>
            <person name="Kato A."/>
            <person name="Komeda Y."/>
        </authorList>
    </citation>
    <scope>NUCLEOTIDE SEQUENCE [GENOMIC DNA]</scope>
    <source>
        <strain>cv. Columbia</strain>
    </source>
</reference>
<reference key="4">
    <citation type="journal article" date="1998" name="Mol. Plant Microbe Interact.">
        <title>Identification of R-gene homologous DNA fragments genetically linked to disease resistance loci in Arabidopsis thaliana.</title>
        <authorList>
            <person name="Aarts M.G.M."/>
            <person name="te Lintel Hekkert B."/>
            <person name="Holub E.B."/>
            <person name="Beynon J.L."/>
            <person name="Stiekema W.J."/>
            <person name="Pereira A."/>
        </authorList>
    </citation>
    <scope>NUCLEOTIDE SEQUENCE [GENOMIC DNA] OF 200-362</scope>
    <source>
        <strain>cv. Columbia</strain>
    </source>
</reference>
<evidence type="ECO:0000250" key="1"/>
<evidence type="ECO:0000255" key="2"/>
<evidence type="ECO:0000305" key="3"/>
<keyword id="KW-0067">ATP-binding</keyword>
<keyword id="KW-0175">Coiled coil</keyword>
<keyword id="KW-0433">Leucine-rich repeat</keyword>
<keyword id="KW-0547">Nucleotide-binding</keyword>
<keyword id="KW-0611">Plant defense</keyword>
<keyword id="KW-1185">Reference proteome</keyword>
<keyword id="KW-0677">Repeat</keyword>
<sequence length="910" mass="105677">MVEAIVSFGVEKLWDRLTQEYEQFQGVEDRIAELKSNLNLLKSFLKDAEAKKNTSQMVRHCVEEIKEIVYDTENMIETFILKEAARKRSGIIRRITKLTCIKVHRWEFASDIGGISKRISKVIQDMHSFGVQQMISDGSQSSHLLQEREREMRQTFSRGYESDFVGLEVNVKKLVGYLVEEDDIQIVSVTGMGGLGKTTLARQVFNHEDVKHQFDRLAWVCVSQEFTRKNVWQMILQNLTSRETKDEILQMEEAELHDELFQLLETSKSLIVFDDIWKEEDWGLINPIFPPKKGWKVLITSRTETIAMHGNRRYVNFKPECLTILESWILFQRIAMPRVDESEFKVDKEMEMMGKQMIKYCGGLPLAVKVLGGLLAAKYTFHDWKRLSENIGCHIVGRTDFSDGNNSSVYHVLSLSFEELPSYLKHCFLYLAHFPEDHNIKVEKLSYCWAAEGILEPRHYHGQTIRDVGESYIEELVRRNMVIAERDVTTLRFEACHLHDMMREVCLLKAKEENFVQIASILPPTANSQYPGTSRRFVSQNPTTLHVSRDINNPKLQSLLIVWENRRKSWKLLGSSFIRLELLRVLDLYKAKFEGRNLPSGIGKLIHLRYLNLDLARVSRLPSSLGNLRLLIYLDINVCTKSLFVPNCLMGMHELRYLRLPFNTSKEIKLGLCNLVNLETLENFSTENSSLEDLRGMVSLRTLTIGLFKHISKETLFASILGMRHLENLSIRTPDGSSKFKRIMEDGIVLDAIHLKQLNLRLYMPKLPDEQHFPSHLTSISLDGCCLVEDPLPILEKLLELKEVRLDFRAFCGKRMVSSDGGFPQLHRLYIWGLAEWEEWIVEEGSMPRLHTLTIWNCQKLKQLPDGLRFIYSIKDLDMDKKWKEILSEGGEEYYKVQHIPSVKFEKDYK</sequence>
<feature type="chain" id="PRO_0000212740" description="Putative disease resistance protein At1g58400">
    <location>
        <begin position="1"/>
        <end position="910"/>
    </location>
</feature>
<feature type="domain" description="NB-ARC">
    <location>
        <begin position="148"/>
        <end position="460"/>
    </location>
</feature>
<feature type="repeat" description="LRR 1">
    <location>
        <begin position="580"/>
        <end position="604"/>
    </location>
</feature>
<feature type="repeat" description="LRR 2">
    <location>
        <begin position="605"/>
        <end position="628"/>
    </location>
</feature>
<feature type="coiled-coil region" evidence="2">
    <location>
        <begin position="15"/>
        <end position="57"/>
    </location>
</feature>
<feature type="binding site" evidence="2">
    <location>
        <begin position="191"/>
        <end position="198"/>
    </location>
    <ligand>
        <name>ATP</name>
        <dbReference type="ChEBI" id="CHEBI:30616"/>
    </ligand>
</feature>
<feature type="sequence conflict" description="In Ref. 4; AAC14556." evidence="3" ref="4">
    <original>E</original>
    <variation>G</variation>
    <location>
        <position position="265"/>
    </location>
</feature>
<feature type="sequence conflict" description="In Ref. 4; AAC14556." evidence="3" ref="4">
    <original>A</original>
    <variation>T</variation>
    <location>
        <position position="307"/>
    </location>
</feature>
<feature type="sequence conflict" description="In Ref. 4; AAC14556." evidence="3" ref="4">
    <original>E</original>
    <variation>G</variation>
    <location>
        <position position="320"/>
    </location>
</feature>
<organism>
    <name type="scientific">Arabidopsis thaliana</name>
    <name type="common">Mouse-ear cress</name>
    <dbReference type="NCBI Taxonomy" id="3702"/>
    <lineage>
        <taxon>Eukaryota</taxon>
        <taxon>Viridiplantae</taxon>
        <taxon>Streptophyta</taxon>
        <taxon>Embryophyta</taxon>
        <taxon>Tracheophyta</taxon>
        <taxon>Spermatophyta</taxon>
        <taxon>Magnoliopsida</taxon>
        <taxon>eudicotyledons</taxon>
        <taxon>Gunneridae</taxon>
        <taxon>Pentapetalae</taxon>
        <taxon>rosids</taxon>
        <taxon>malvids</taxon>
        <taxon>Brassicales</taxon>
        <taxon>Brassicaceae</taxon>
        <taxon>Camelineae</taxon>
        <taxon>Arabidopsis</taxon>
    </lineage>
</organism>
<name>DRL8_ARATH</name>
<proteinExistence type="inferred from homology"/>
<protein>
    <recommendedName>
        <fullName>Putative disease resistance protein At1g58400</fullName>
    </recommendedName>
</protein>
<accession>Q8W3K3</accession>
<accession>F4IBC7</accession>
<accession>O64974</accession>
<accession>Q9C645</accession>